<accession>D0ZV89</accession>
<proteinExistence type="evidence at protein level"/>
<evidence type="ECO:0000250" key="1"/>
<evidence type="ECO:0000255" key="2"/>
<evidence type="ECO:0000255" key="3">
    <source>
        <dbReference type="PROSITE-ProRule" id="PRU00102"/>
    </source>
</evidence>
<evidence type="ECO:0000255" key="4">
    <source>
        <dbReference type="PROSITE-ProRule" id="PRU00107"/>
    </source>
</evidence>
<evidence type="ECO:0000269" key="5">
    <source>
    </source>
</evidence>
<evidence type="ECO:0000269" key="6">
    <source>
    </source>
</evidence>
<evidence type="ECO:0000269" key="7">
    <source>
    </source>
</evidence>
<evidence type="ECO:0000269" key="8">
    <source>
    </source>
</evidence>
<evidence type="ECO:0000269" key="9">
    <source>
    </source>
</evidence>
<evidence type="ECO:0000269" key="10">
    <source>
    </source>
</evidence>
<evidence type="ECO:0000269" key="11">
    <source>
    </source>
</evidence>
<evidence type="ECO:0000269" key="12">
    <source>
    </source>
</evidence>
<evidence type="ECO:0000305" key="13"/>
<evidence type="ECO:0000305" key="14">
    <source>
    </source>
</evidence>
<dbReference type="EC" id="2.7.13.3"/>
<dbReference type="EC" id="3.1.3.-"/>
<dbReference type="EMBL" id="CP001363">
    <property type="protein sequence ID" value="ACY87894.1"/>
    <property type="molecule type" value="Genomic_DNA"/>
</dbReference>
<dbReference type="RefSeq" id="WP_001031687.1">
    <property type="nucleotide sequence ID" value="NZ_CP043402.1"/>
</dbReference>
<dbReference type="BMRB" id="D0ZV89"/>
<dbReference type="SMR" id="D0ZV89"/>
<dbReference type="iPTMnet" id="D0ZV89"/>
<dbReference type="KEGG" id="seo:STM14_1408"/>
<dbReference type="PATRIC" id="fig|588858.6.peg.1378"/>
<dbReference type="HOGENOM" id="CLU_000445_42_0_6"/>
<dbReference type="BioCyc" id="SENT588858:STM14_RS06660-MONOMER"/>
<dbReference type="PHI-base" id="PHI:4899"/>
<dbReference type="PHI-base" id="PHI:6318"/>
<dbReference type="PHI-base" id="PHI:7356"/>
<dbReference type="Proteomes" id="UP000002695">
    <property type="component" value="Chromosome"/>
</dbReference>
<dbReference type="GO" id="GO:0005886">
    <property type="term" value="C:plasma membrane"/>
    <property type="evidence" value="ECO:0007669"/>
    <property type="project" value="UniProtKB-SubCell"/>
</dbReference>
<dbReference type="GO" id="GO:0005524">
    <property type="term" value="F:ATP binding"/>
    <property type="evidence" value="ECO:0007669"/>
    <property type="project" value="UniProtKB-KW"/>
</dbReference>
<dbReference type="GO" id="GO:0046872">
    <property type="term" value="F:metal ion binding"/>
    <property type="evidence" value="ECO:0007669"/>
    <property type="project" value="UniProtKB-KW"/>
</dbReference>
<dbReference type="GO" id="GO:0004721">
    <property type="term" value="F:phosphoprotein phosphatase activity"/>
    <property type="evidence" value="ECO:0007669"/>
    <property type="project" value="UniProtKB-KW"/>
</dbReference>
<dbReference type="GO" id="GO:0000155">
    <property type="term" value="F:phosphorelay sensor kinase activity"/>
    <property type="evidence" value="ECO:0007669"/>
    <property type="project" value="InterPro"/>
</dbReference>
<dbReference type="CDD" id="cd16954">
    <property type="entry name" value="HATPase_PhoQ-like"/>
    <property type="match status" value="1"/>
</dbReference>
<dbReference type="FunFam" id="1.10.287.130:FF:000013">
    <property type="entry name" value="Sensor histidine kinase PhoQ"/>
    <property type="match status" value="1"/>
</dbReference>
<dbReference type="FunFam" id="3.30.450.140:FF:000001">
    <property type="entry name" value="Virulence sensor histidine kinase PhoQ"/>
    <property type="match status" value="1"/>
</dbReference>
<dbReference type="FunFam" id="3.30.565.10:FF:000019">
    <property type="entry name" value="Virulence sensor histidine kinase PhoQ"/>
    <property type="match status" value="1"/>
</dbReference>
<dbReference type="Gene3D" id="1.10.287.130">
    <property type="match status" value="1"/>
</dbReference>
<dbReference type="Gene3D" id="3.30.450.140">
    <property type="match status" value="1"/>
</dbReference>
<dbReference type="Gene3D" id="3.30.565.10">
    <property type="entry name" value="Histidine kinase-like ATPase, C-terminal domain"/>
    <property type="match status" value="1"/>
</dbReference>
<dbReference type="InterPro" id="IPR003660">
    <property type="entry name" value="HAMP_dom"/>
</dbReference>
<dbReference type="InterPro" id="IPR036890">
    <property type="entry name" value="HATPase_C_sf"/>
</dbReference>
<dbReference type="InterPro" id="IPR005467">
    <property type="entry name" value="His_kinase_dom"/>
</dbReference>
<dbReference type="InterPro" id="IPR036097">
    <property type="entry name" value="HisK_dim/P_sf"/>
</dbReference>
<dbReference type="InterPro" id="IPR015014">
    <property type="entry name" value="PhoQ_Sensor"/>
</dbReference>
<dbReference type="InterPro" id="IPR038429">
    <property type="entry name" value="PhoQ_Sensor_sf"/>
</dbReference>
<dbReference type="InterPro" id="IPR004358">
    <property type="entry name" value="Sig_transdc_His_kin-like_C"/>
</dbReference>
<dbReference type="InterPro" id="IPR050428">
    <property type="entry name" value="TCS_sensor_his_kinase"/>
</dbReference>
<dbReference type="NCBIfam" id="NF008077">
    <property type="entry name" value="PRK10815.1"/>
    <property type="match status" value="1"/>
</dbReference>
<dbReference type="PANTHER" id="PTHR45436">
    <property type="entry name" value="SENSOR HISTIDINE KINASE YKOH"/>
    <property type="match status" value="1"/>
</dbReference>
<dbReference type="PANTHER" id="PTHR45436:SF4">
    <property type="entry name" value="SENSOR PROTEIN PHOQ"/>
    <property type="match status" value="1"/>
</dbReference>
<dbReference type="Pfam" id="PF02518">
    <property type="entry name" value="HATPase_c"/>
    <property type="match status" value="1"/>
</dbReference>
<dbReference type="Pfam" id="PF08918">
    <property type="entry name" value="PhoQ_Sensor"/>
    <property type="match status" value="1"/>
</dbReference>
<dbReference type="PRINTS" id="PR00344">
    <property type="entry name" value="BCTRLSENSOR"/>
</dbReference>
<dbReference type="SMART" id="SM00387">
    <property type="entry name" value="HATPase_c"/>
    <property type="match status" value="1"/>
</dbReference>
<dbReference type="SUPFAM" id="SSF55874">
    <property type="entry name" value="ATPase domain of HSP90 chaperone/DNA topoisomerase II/histidine kinase"/>
    <property type="match status" value="1"/>
</dbReference>
<dbReference type="SUPFAM" id="SSF47384">
    <property type="entry name" value="Homodimeric domain of signal transducing histidine kinase"/>
    <property type="match status" value="1"/>
</dbReference>
<dbReference type="PROSITE" id="PS50885">
    <property type="entry name" value="HAMP"/>
    <property type="match status" value="1"/>
</dbReference>
<dbReference type="PROSITE" id="PS50109">
    <property type="entry name" value="HIS_KIN"/>
    <property type="match status" value="1"/>
</dbReference>
<comment type="function">
    <text evidence="5 6 8 9 11">Member of the two-component regulatory system PhoP/PhoQ which regulates the expression of genes involved in virulence, adaptation to acidic and low Mg(2+) environments and resistance to host defense antimicrobial peptides. Essential for intramacrophage survival of S.typhimurium. In low periplasmic Mg(2+), PhoQ functions as a membrane-associated protein kinase that undergoes autophosphorylation and subsequently transfers the phosphate to PhoP, resulting in the expression of PhoP-activated genes (PAG) and repression of PhoP-repressed genes (PRG). In high periplasmic Mg(2+), acts as a protein phosphatase that dephosphorylates phospho-PhoP, resulting in the repression of PAG and may lead to expression of some PRG. Essential for transcription of spiC inside macrophages by controlling the expression of the two-component regulatory system SsrB/SpiR (SsrA) and Pir at transcriptional and post-transcriptional levels respectively. Promotes expression of the two-component regulatory system PmrA/PmrB via activation of pmrD gene. Is required to attenuate bacterial growth within fibroblast cells and to enhance bacterial resistance to bile in intestinal cells. Negatively regulates prgH, which is required for invasion of epithelial cells. Involved in acid tolerance.</text>
</comment>
<comment type="catalytic activity">
    <reaction>
        <text>ATP + protein L-histidine = ADP + protein N-phospho-L-histidine.</text>
        <dbReference type="EC" id="2.7.13.3"/>
    </reaction>
</comment>
<comment type="cofactor">
    <cofactor evidence="10">
        <name>Ca(2+)</name>
        <dbReference type="ChEBI" id="CHEBI:29108"/>
    </cofactor>
    <cofactor evidence="10">
        <name>Mg(2+)</name>
        <dbReference type="ChEBI" id="CHEBI:18420"/>
    </cofactor>
    <text evidence="10">Binds up to 3 divalent cations (Ca(2+) or Mg(2+)); their binding site probably overlaps with that of cationic antimicrobial peptides that induce the operon.</text>
</comment>
<comment type="subunit">
    <text evidence="1 13">Homodimer; probably dimerizes via the cytoplasmic domain (By similarity). Interacts with MgrB in the periplasm, altering its activity and that of downstream effector PhoP (Probable).</text>
</comment>
<comment type="subcellular location">
    <subcellularLocation>
        <location evidence="1">Cell inner membrane</location>
        <topology evidence="1">Multi-pass membrane protein</topology>
    </subcellularLocation>
</comment>
<comment type="induction">
    <text evidence="10 13">The phoP/phoQ operon is positively autoregulated by both PhoP and PhoQ in a Mg(2+)-dependent manner. Repressed by RcsB via sigma factor RpoS (Probable). Induced by antimicrobial peptides (similar to those in macrophages) and low Mg(2+) concentrations.</text>
</comment>
<comment type="miscellaneous">
    <text>Substitutions experiments show that amino acid Thr-48 may be involved in the conformational changes responsible for the balance between kinase-dominant state and phosphatase-dominant state.</text>
</comment>
<comment type="miscellaneous">
    <text>The PhoP/PhoQ-signaling cascade, which activates virulence membrane genes (pagC, pagO, pagD, pagK, pgtE and phoN), is induced by cationic antimicrobial peptides (CAMP) (polymyxin, alpha-helical peptide C18G and sheet peptide protegrin-1) at sublethal concentrations.</text>
</comment>
<keyword id="KW-0067">ATP-binding</keyword>
<keyword id="KW-0997">Cell inner membrane</keyword>
<keyword id="KW-1003">Cell membrane</keyword>
<keyword id="KW-0903">Direct protein sequencing</keyword>
<keyword id="KW-0341">Growth regulation</keyword>
<keyword id="KW-0378">Hydrolase</keyword>
<keyword id="KW-0418">Kinase</keyword>
<keyword id="KW-0460">Magnesium</keyword>
<keyword id="KW-0472">Membrane</keyword>
<keyword id="KW-0479">Metal-binding</keyword>
<keyword id="KW-0547">Nucleotide-binding</keyword>
<keyword id="KW-0597">Phosphoprotein</keyword>
<keyword id="KW-0904">Protein phosphatase</keyword>
<keyword id="KW-0808">Transferase</keyword>
<keyword id="KW-0812">Transmembrane</keyword>
<keyword id="KW-1133">Transmembrane helix</keyword>
<keyword id="KW-0902">Two-component regulatory system</keyword>
<keyword id="KW-0843">Virulence</keyword>
<sequence>MNKFARHFLPLSLRVRFLLATAGVVLVLSLAYGIVALVGYSVSFDKTTFRLLRGESNLFYTLAKWENNKISVELPENLDMQSPTMTLIYDETGKLLWTQRNIPWLIKSIQPEWLKTNGFHEIETNVDATSTLLSEDHSAQEKLKEVREDDDDAEMTHSVAVNIYPATARMPQLTIVVVDTIPIELKRSYMVWSWFVYVLAANLLLVIPLLWIAAWWSLRPIEALAREVRELEDHHREMLNPETTRELTSLVRNLNQLLKSERERYNKYRTTLTDLTHSLKTPLAVLQSTLRSLRNEKMSVSKAEPVMLEQISRISQQIGYYLHRASMRGSGVLLSRELHPVAPLLDNLISALNKVYQRKGVNISMDISPEISFVGEQNDFVEVMGNVLDNACKYCLEFVEISARQTDDHLHIFVEDDGPGIPHSKRSLVFDRGQRADTLRPGQGVGLAVAREITEQYAGQIIASDSLLGGARMEVVFGRQHPTQKEE</sequence>
<organism>
    <name type="scientific">Salmonella typhimurium (strain 14028s / SGSC 2262)</name>
    <dbReference type="NCBI Taxonomy" id="588858"/>
    <lineage>
        <taxon>Bacteria</taxon>
        <taxon>Pseudomonadati</taxon>
        <taxon>Pseudomonadota</taxon>
        <taxon>Gammaproteobacteria</taxon>
        <taxon>Enterobacterales</taxon>
        <taxon>Enterobacteriaceae</taxon>
        <taxon>Salmonella</taxon>
    </lineage>
</organism>
<reference key="1">
    <citation type="journal article" date="2010" name="J. Bacteriol.">
        <title>Short-term signatures of evolutionary change in the Salmonella enterica serovar typhimurium 14028 genome.</title>
        <authorList>
            <person name="Jarvik T."/>
            <person name="Smillie C."/>
            <person name="Groisman E.A."/>
            <person name="Ochman H."/>
        </authorList>
    </citation>
    <scope>NUCLEOTIDE SEQUENCE [LARGE SCALE GENOMIC DNA]</scope>
    <source>
        <strain>14028s / SGSC 2262</strain>
    </source>
</reference>
<reference key="2">
    <citation type="journal article" date="1997" name="J. Biol. Chem.">
        <title>Characterization of the bacterial sensor protein PhoQ. Evidence for distinct binding sites for Mg2+ and Ca2+.</title>
        <authorList>
            <person name="Garcia Vescovi E."/>
            <person name="Ayala Y.M."/>
            <person name="Di Cera E."/>
            <person name="Groisman E.A."/>
        </authorList>
    </citation>
    <scope>PARTIAL PROTEIN SEQUENCE</scope>
    <scope>DIVALENT CATION-BINDING SITES</scope>
    <scope>MUTAGENESIS OF THR-48</scope>
    <source>
        <strain>14028s / SGSC 2262</strain>
    </source>
</reference>
<reference key="3">
    <citation type="journal article" date="1993" name="J. Bacteriol.">
        <title>A PhoP-repressed gene promotes Salmonella typhimurium invasion of epithelial cells.</title>
        <authorList>
            <person name="Behlau I."/>
            <person name="Miller S.I."/>
        </authorList>
    </citation>
    <scope>FUNCTION</scope>
    <source>
        <strain>14028s / SGSC 2262</strain>
    </source>
</reference>
<reference key="4">
    <citation type="journal article" date="1995" name="J. Bacteriol.">
        <title>Transcriptional autoregulation of the Salmonella typhimurium phoPQ operon.</title>
        <authorList>
            <person name="Soncini F.C."/>
            <person name="Garcia Vescovi E."/>
            <person name="Groisman E.A."/>
        </authorList>
    </citation>
    <scope>AUTOREGULATION</scope>
    <source>
        <strain>14028s / SGSC 2262</strain>
    </source>
</reference>
<reference key="5">
    <citation type="journal article" date="1996" name="Cell">
        <title>Mg2+ as an extracellular signal: environmental regulation of Salmonella virulence.</title>
        <authorList>
            <person name="Garcia Vescovi E."/>
            <person name="Soncini F.C."/>
            <person name="Groisman E.A."/>
        </authorList>
    </citation>
    <scope>REGULATION BY MG(2+)</scope>
    <source>
        <strain>14028s / SGSC 2262</strain>
    </source>
</reference>
<reference key="6">
    <citation type="journal article" date="1999" name="Infect. Immun.">
        <title>PhoP-PhoQ-regulated loci are required for enhanced bile resistance in Salmonella spp.</title>
        <authorList>
            <person name="van Velkinburgh J.C."/>
            <person name="Gunn J.S."/>
        </authorList>
    </citation>
    <scope>FUNCTION</scope>
    <source>
        <strain>14028s / SGSC 2262</strain>
    </source>
</reference>
<reference key="7">
    <citation type="journal article" date="2000" name="EMBO J.">
        <title>A small protein that mediates the activation of a two-component system by another two-component system.</title>
        <authorList>
            <person name="Kox L.F.F."/>
            <person name="Woesten M.M.S.M."/>
            <person name="Groisman E.A."/>
        </authorList>
    </citation>
    <scope>FUNCTION</scope>
    <source>
        <strain>14028s / SGSC 2262</strain>
    </source>
</reference>
<reference key="8">
    <citation type="journal article" date="2003" name="J. Mol. Biol.">
        <title>Mg2+ sensing by the Mg2+ sensor PhoQ of Salmonella enterica.</title>
        <authorList>
            <person name="Chamnongpol S."/>
            <person name="Cromie M."/>
            <person name="Groisman E.A."/>
        </authorList>
    </citation>
    <scope>PHOSPHORYLATION AT HIS-277</scope>
    <scope>MUTAGENESIS OF THR-47; PRO-83; ILE-88; TYR-89; GLY-93; LEU-96; TRP-97; HIS-120; ASP-149; ASP-150; ASP-151; ASP-152; THR-156 AND HIS-277</scope>
    <source>
        <strain>14028s / SGSC 2262</strain>
    </source>
</reference>
<reference key="9">
    <citation type="journal article" date="2003" name="Mol. Microbiol.">
        <title>Regulation of Salmonella typhimurium virulence gene expression by cationic antimicrobial peptides.</title>
        <authorList>
            <person name="Bader M.W."/>
            <person name="Navarre W.W."/>
            <person name="Shiau W."/>
            <person name="Nikaido H."/>
            <person name="Frye J.G."/>
            <person name="McClelland M."/>
            <person name="Fang F.C."/>
            <person name="Miller S.I."/>
        </authorList>
    </citation>
    <scope>FUNCTION</scope>
    <scope>REGULATION BY CATIONIC ANTIMICROBIAL PEPTIDES (CAMP)</scope>
    <source>
        <strain>14028s / SGSC 2262</strain>
    </source>
</reference>
<reference key="10">
    <citation type="journal article" date="2005" name="Cell">
        <title>Recognition of antimicrobial peptides by a bacterial sensor kinase.</title>
        <authorList>
            <person name="Bader M.W."/>
            <person name="Sanowar S."/>
            <person name="Daley M.E."/>
            <person name="Schneider A.R."/>
            <person name="Cho U."/>
            <person name="Xu W."/>
            <person name="Klevit R.E."/>
            <person name="Le Moual H."/>
            <person name="Miller S.I."/>
        </authorList>
    </citation>
    <scope>AUTOPHOSPHORYLATION</scope>
    <scope>INDUCTION</scope>
    <scope>TOPOLOGY</scope>
    <scope>PROBABLE BINDING TO ANTIMICROBIAL PEPTIDES</scope>
    <scope>COFACTOR</scope>
    <scope>MUTAGENESIS OF THR-156 AND GLU-184</scope>
    <source>
        <strain>14028s / SGSC 2262</strain>
    </source>
</reference>
<reference key="11">
    <citation type="journal article" date="2005" name="Mol. Microbiol.">
        <title>The PhoP/PhoQ system controls the intramacrophage type three secretion system of Salmonella enterica.</title>
        <authorList>
            <person name="Bijlsma J.J.E."/>
            <person name="Groisman E.A."/>
        </authorList>
    </citation>
    <scope>FUNCTION</scope>
    <source>
        <strain>14028s / SGSC 2262</strain>
    </source>
</reference>
<protein>
    <recommendedName>
        <fullName>Virulence sensor histidine kinase PhoQ</fullName>
        <ecNumber>2.7.13.3</ecNumber>
        <ecNumber>3.1.3.-</ecNumber>
    </recommendedName>
    <alternativeName>
        <fullName>Sensor histidine protein kinase/phosphatase PhoQ</fullName>
    </alternativeName>
</protein>
<gene>
    <name type="primary">phoQ</name>
    <name type="ordered locus">STM14_1408</name>
</gene>
<feature type="chain" id="PRO_0000424541" description="Virulence sensor histidine kinase PhoQ">
    <location>
        <begin position="1"/>
        <end position="487"/>
    </location>
</feature>
<feature type="topological domain" description="Cytoplasmic" evidence="14">
    <location>
        <begin position="1"/>
        <end position="16"/>
    </location>
</feature>
<feature type="transmembrane region" description="Helical" evidence="2">
    <location>
        <begin position="17"/>
        <end position="37"/>
    </location>
</feature>
<feature type="topological domain" description="Periplasmic" evidence="14">
    <location>
        <begin position="38"/>
        <end position="193"/>
    </location>
</feature>
<feature type="transmembrane region" description="Helical" evidence="2">
    <location>
        <begin position="194"/>
        <end position="214"/>
    </location>
</feature>
<feature type="topological domain" description="Cytoplasmic" evidence="14">
    <location>
        <begin position="215"/>
        <end position="487"/>
    </location>
</feature>
<feature type="domain" description="HAMP" evidence="3">
    <location>
        <begin position="215"/>
        <end position="266"/>
    </location>
</feature>
<feature type="domain" description="Histidine kinase" evidence="4">
    <location>
        <begin position="274"/>
        <end position="481"/>
    </location>
</feature>
<feature type="region of interest" description="Sensor domain, required for response to antimicrobial peptides">
    <location>
        <begin position="51"/>
        <end position="181"/>
    </location>
</feature>
<feature type="binding site">
    <location>
        <position position="123"/>
    </location>
    <ligand>
        <name>a divalent metal cation</name>
        <dbReference type="ChEBI" id="CHEBI:60240"/>
        <label>1</label>
    </ligand>
</feature>
<feature type="binding site" evidence="1">
    <location>
        <position position="151"/>
    </location>
    <ligand>
        <name>a divalent metal cation</name>
        <dbReference type="ChEBI" id="CHEBI:60240"/>
    </ligand>
</feature>
<feature type="binding site" evidence="1">
    <location>
        <position position="152"/>
    </location>
    <ligand>
        <name>a divalent metal cation</name>
        <dbReference type="ChEBI" id="CHEBI:60240"/>
    </ligand>
</feature>
<feature type="binding site">
    <location>
        <position position="154"/>
    </location>
    <ligand>
        <name>a divalent metal cation</name>
        <dbReference type="ChEBI" id="CHEBI:60240"/>
        <label>2</label>
    </ligand>
</feature>
<feature type="binding site" evidence="1">
    <location>
        <begin position="386"/>
        <end position="394"/>
    </location>
    <ligand>
        <name>ATP</name>
        <dbReference type="ChEBI" id="CHEBI:30616"/>
    </ligand>
</feature>
<feature type="binding site" evidence="1">
    <location>
        <position position="386"/>
    </location>
    <ligand>
        <name>Mg(2+)</name>
        <dbReference type="ChEBI" id="CHEBI:18420"/>
    </ligand>
</feature>
<feature type="binding site" evidence="1">
    <location>
        <begin position="416"/>
        <end position="421"/>
    </location>
    <ligand>
        <name>ATP</name>
        <dbReference type="ChEBI" id="CHEBI:30616"/>
    </ligand>
</feature>
<feature type="binding site" evidence="1">
    <location>
        <begin position="435"/>
        <end position="447"/>
    </location>
    <ligand>
        <name>ATP</name>
        <dbReference type="ChEBI" id="CHEBI:30616"/>
    </ligand>
</feature>
<feature type="binding site" evidence="1">
    <location>
        <position position="443"/>
    </location>
    <ligand>
        <name>Mg(2+)</name>
        <dbReference type="ChEBI" id="CHEBI:18420"/>
    </ligand>
</feature>
<feature type="site" description="Plays a critical role in the switching between kinase and phosphatase states" evidence="1">
    <location>
        <position position="202"/>
    </location>
</feature>
<feature type="modified residue" description="Phosphohistidine; by autocatalysis" evidence="4 7">
    <location>
        <position position="277"/>
    </location>
</feature>
<feature type="mutagenesis site" description="Retains a wild-type Mg(2+) response." evidence="7">
    <original>T</original>
    <variation>A</variation>
    <location>
        <position position="47"/>
    </location>
</feature>
<feature type="mutagenesis site" description="In pho-24; low affinity for Ca(2+). Confers to cells a PhoP constitutively active phenotype. Affects PhoP/PhoQ-signaling cascade and increase net phosphorylation of PhoP. No effect on initial rate of autophosphorylation and decreases phosphatase activity." evidence="12">
    <original>T</original>
    <variation>I</variation>
    <location>
        <position position="48"/>
    </location>
</feature>
<feature type="mutagenesis site" description="Retains a wild-type Mg(2+) response." evidence="7">
    <original>P</original>
    <variation>A</variation>
    <location>
        <position position="83"/>
    </location>
</feature>
<feature type="mutagenesis site" description="Retains a wild-type Mg(2+) response." evidence="7">
    <original>I</original>
    <variation>A</variation>
    <location>
        <position position="88"/>
    </location>
</feature>
<feature type="mutagenesis site" description="Retains a wild-type Mg(2+) response." evidence="7">
    <original>Y</original>
    <variation>A</variation>
    <location>
        <position position="89"/>
    </location>
</feature>
<feature type="mutagenesis site" description="Retains a wild-type Mg(2+) response. Less sensitive to Mg(2+) response than wild-type and defective in Mg(2+) binding; when associated with R-97." evidence="7">
    <original>G</original>
    <variation>A</variation>
    <location>
        <position position="93"/>
    </location>
</feature>
<feature type="mutagenesis site" description="Retains a wild-type Mg(2+) response." evidence="7">
    <original>L</original>
    <variation>A</variation>
    <location>
        <position position="96"/>
    </location>
</feature>
<feature type="mutagenesis site" description="Retains a wild-type Mg(2+) response." evidence="7">
    <original>W</original>
    <variation>A</variation>
    <location>
        <position position="97"/>
    </location>
</feature>
<feature type="mutagenesis site" description="Less sensitive to Mg(2+) response than wild-type and defective in Mg(2+) binding; when associated with A-93." evidence="7">
    <original>W</original>
    <variation>R</variation>
    <location>
        <position position="97"/>
    </location>
</feature>
<feature type="mutagenesis site" description="Less sensitive to Mg(2+)response and defective in Mg(2+) binding than wild-type." evidence="7">
    <original>H</original>
    <variation>A</variation>
    <location>
        <position position="120"/>
    </location>
</feature>
<feature type="mutagenesis site" description="Less sensitive to Mg(2+) response than wild-type. Retains a wild-type Mg(2+) response in strain PhoP* PhoQ expressing mutant phoP N-93." evidence="7">
    <original>D</original>
    <variation>A</variation>
    <location>
        <position position="149"/>
    </location>
</feature>
<feature type="mutagenesis site" description="Less sensitive to Mg(2+) response than wild-type in strain PhoP* PhoQ expressing mutant phoP N-93." evidence="7">
    <original>D</original>
    <variation>A</variation>
    <location>
        <position position="150"/>
    </location>
</feature>
<feature type="mutagenesis site" description="Less sensitive to Mg(2+) response than wild-type in strain PhoP* PhoQ expressing mutant phoP N-93." evidence="7">
    <original>D</original>
    <variation>A</variation>
    <location>
        <position position="151"/>
    </location>
</feature>
<feature type="mutagenesis site" description="Less sensitive to Mg(2+) response than wild-type in strain PhoP* PhoQ expressing mutant phoP N-93." evidence="7">
    <original>D</original>
    <variation>A</variation>
    <location>
        <position position="152"/>
    </location>
</feature>
<feature type="mutagenesis site" description="Less sensitive to Mg(2+) response and defective binding than wild-type." evidence="7 10">
    <original>T</original>
    <variation>A</variation>
    <location>
        <position position="156"/>
    </location>
</feature>
<feature type="mutagenesis site" description="Defective in antimicrobial peptide response. Further decrease; when associated with K-184." evidence="7 10">
    <original>T</original>
    <variation>K</variation>
    <location>
        <position position="156"/>
    </location>
</feature>
<feature type="mutagenesis site" description="Defective in antimicrobial peptide response. Further decrease; when associated with K-156." evidence="10">
    <original>E</original>
    <variation>K</variation>
    <location>
        <position position="184"/>
    </location>
</feature>
<feature type="mutagenesis site" description="Retains a wild-type Mg(2+) response only at 10 mM." evidence="7">
    <original>H</original>
    <variation>A</variation>
    <location>
        <position position="277"/>
    </location>
</feature>
<feature type="mutagenesis site" description="Retains a wild-type Mg(2+) response only at 10 mM in strain PhoP* PhoQ expressing mutant phoP N-93. Loss of autophosphorylation, irrespective of the presence of Mg(2+). Unable to promote phoP dephosphorylation even in presence of added Mg(2+)." evidence="7">
    <original>H</original>
    <variation>V</variation>
    <location>
        <position position="277"/>
    </location>
</feature>
<name>PHOQ_SALT1</name>